<sequence length="370" mass="40027">MNEMTHRTKTRPVKVGNLTIGGNNELIIQSMTTTKTHDVEATVAEIKRLEEAGCQVVRVAVPDERAANAIADIKKQINIPLVADIHFDYRLALKAIEGGIDKVRINPGNIGRRHKVEAVVNAAKERGIPIRIGVNAGSLERHILEKYGYPTADGMVESALHHIKILEDLDFHDIIVSMKASDVNLAIEAYEKAARAFDYPLHLGITESGTLFAGTVKSAAGLGAILNKGIGNTLRISLSADPVEEVKVARELLKSFGLASNAATLISCPTCGRIEIDLISIANEVEEYISTLQVPIKVAVLGCAVNGPGEAREADIGIAGARGEGLLFRKGQVVRKVPEEIMVEELKKEIDVIAAEMAAEREKEKETQEQ</sequence>
<feature type="chain" id="PRO_0000190534" description="4-hydroxy-3-methylbut-2-en-1-yl diphosphate synthase (flavodoxin)">
    <location>
        <begin position="1"/>
        <end position="370"/>
    </location>
</feature>
<feature type="binding site" evidence="1">
    <location>
        <position position="268"/>
    </location>
    <ligand>
        <name>[4Fe-4S] cluster</name>
        <dbReference type="ChEBI" id="CHEBI:49883"/>
    </ligand>
</feature>
<feature type="binding site" evidence="1">
    <location>
        <position position="271"/>
    </location>
    <ligand>
        <name>[4Fe-4S] cluster</name>
        <dbReference type="ChEBI" id="CHEBI:49883"/>
    </ligand>
</feature>
<feature type="binding site" evidence="1">
    <location>
        <position position="303"/>
    </location>
    <ligand>
        <name>[4Fe-4S] cluster</name>
        <dbReference type="ChEBI" id="CHEBI:49883"/>
    </ligand>
</feature>
<feature type="binding site" evidence="1">
    <location>
        <position position="310"/>
    </location>
    <ligand>
        <name>[4Fe-4S] cluster</name>
        <dbReference type="ChEBI" id="CHEBI:49883"/>
    </ligand>
</feature>
<protein>
    <recommendedName>
        <fullName evidence="1">4-hydroxy-3-methylbut-2-en-1-yl diphosphate synthase (flavodoxin)</fullName>
        <ecNumber evidence="1">1.17.7.3</ecNumber>
    </recommendedName>
    <alternativeName>
        <fullName evidence="1">1-hydroxy-2-methyl-2-(E)-butenyl 4-diphosphate synthase</fullName>
    </alternativeName>
</protein>
<proteinExistence type="inferred from homology"/>
<keyword id="KW-0004">4Fe-4S</keyword>
<keyword id="KW-0408">Iron</keyword>
<keyword id="KW-0411">Iron-sulfur</keyword>
<keyword id="KW-0414">Isoprene biosynthesis</keyword>
<keyword id="KW-0479">Metal-binding</keyword>
<keyword id="KW-0560">Oxidoreductase</keyword>
<name>ISPG_BACHK</name>
<evidence type="ECO:0000255" key="1">
    <source>
        <dbReference type="HAMAP-Rule" id="MF_00159"/>
    </source>
</evidence>
<reference key="1">
    <citation type="journal article" date="2006" name="J. Bacteriol.">
        <title>Pathogenomic sequence analysis of Bacillus cereus and Bacillus thuringiensis isolates closely related to Bacillus anthracis.</title>
        <authorList>
            <person name="Han C.S."/>
            <person name="Xie G."/>
            <person name="Challacombe J.F."/>
            <person name="Altherr M.R."/>
            <person name="Bhotika S.S."/>
            <person name="Bruce D."/>
            <person name="Campbell C.S."/>
            <person name="Campbell M.L."/>
            <person name="Chen J."/>
            <person name="Chertkov O."/>
            <person name="Cleland C."/>
            <person name="Dimitrijevic M."/>
            <person name="Doggett N.A."/>
            <person name="Fawcett J.J."/>
            <person name="Glavina T."/>
            <person name="Goodwin L.A."/>
            <person name="Hill K.K."/>
            <person name="Hitchcock P."/>
            <person name="Jackson P.J."/>
            <person name="Keim P."/>
            <person name="Kewalramani A.R."/>
            <person name="Longmire J."/>
            <person name="Lucas S."/>
            <person name="Malfatti S."/>
            <person name="McMurry K."/>
            <person name="Meincke L.J."/>
            <person name="Misra M."/>
            <person name="Moseman B.L."/>
            <person name="Mundt M."/>
            <person name="Munk A.C."/>
            <person name="Okinaka R.T."/>
            <person name="Parson-Quintana B."/>
            <person name="Reilly L.P."/>
            <person name="Richardson P."/>
            <person name="Robinson D.L."/>
            <person name="Rubin E."/>
            <person name="Saunders E."/>
            <person name="Tapia R."/>
            <person name="Tesmer J.G."/>
            <person name="Thayer N."/>
            <person name="Thompson L.S."/>
            <person name="Tice H."/>
            <person name="Ticknor L.O."/>
            <person name="Wills P.L."/>
            <person name="Brettin T.S."/>
            <person name="Gilna P."/>
        </authorList>
    </citation>
    <scope>NUCLEOTIDE SEQUENCE [LARGE SCALE GENOMIC DNA]</scope>
    <source>
        <strain>97-27</strain>
    </source>
</reference>
<organism>
    <name type="scientific">Bacillus thuringiensis subsp. konkukian (strain 97-27)</name>
    <dbReference type="NCBI Taxonomy" id="281309"/>
    <lineage>
        <taxon>Bacteria</taxon>
        <taxon>Bacillati</taxon>
        <taxon>Bacillota</taxon>
        <taxon>Bacilli</taxon>
        <taxon>Bacillales</taxon>
        <taxon>Bacillaceae</taxon>
        <taxon>Bacillus</taxon>
        <taxon>Bacillus cereus group</taxon>
    </lineage>
</organism>
<dbReference type="EC" id="1.17.7.3" evidence="1"/>
<dbReference type="EMBL" id="AE017355">
    <property type="protein sequence ID" value="AAT63790.1"/>
    <property type="molecule type" value="Genomic_DNA"/>
</dbReference>
<dbReference type="RefSeq" id="YP_038337.1">
    <property type="nucleotide sequence ID" value="NC_005957.1"/>
</dbReference>
<dbReference type="SMR" id="Q6HDN9"/>
<dbReference type="KEGG" id="btk:BT9727_4018"/>
<dbReference type="PATRIC" id="fig|281309.8.peg.4286"/>
<dbReference type="HOGENOM" id="CLU_042258_0_0_9"/>
<dbReference type="UniPathway" id="UPA00056">
    <property type="reaction ID" value="UER00096"/>
</dbReference>
<dbReference type="Proteomes" id="UP000001301">
    <property type="component" value="Chromosome"/>
</dbReference>
<dbReference type="GO" id="GO:0051539">
    <property type="term" value="F:4 iron, 4 sulfur cluster binding"/>
    <property type="evidence" value="ECO:0007669"/>
    <property type="project" value="UniProtKB-UniRule"/>
</dbReference>
<dbReference type="GO" id="GO:0046429">
    <property type="term" value="F:4-hydroxy-3-methylbut-2-en-1-yl diphosphate synthase activity (ferredoxin)"/>
    <property type="evidence" value="ECO:0007669"/>
    <property type="project" value="UniProtKB-UniRule"/>
</dbReference>
<dbReference type="GO" id="GO:0141197">
    <property type="term" value="F:4-hydroxy-3-methylbut-2-enyl-diphosphate synthase activity (flavodoxin)"/>
    <property type="evidence" value="ECO:0007669"/>
    <property type="project" value="UniProtKB-EC"/>
</dbReference>
<dbReference type="GO" id="GO:0005506">
    <property type="term" value="F:iron ion binding"/>
    <property type="evidence" value="ECO:0007669"/>
    <property type="project" value="InterPro"/>
</dbReference>
<dbReference type="GO" id="GO:0019288">
    <property type="term" value="P:isopentenyl diphosphate biosynthetic process, methylerythritol 4-phosphate pathway"/>
    <property type="evidence" value="ECO:0007669"/>
    <property type="project" value="UniProtKB-UniRule"/>
</dbReference>
<dbReference type="GO" id="GO:0016114">
    <property type="term" value="P:terpenoid biosynthetic process"/>
    <property type="evidence" value="ECO:0007669"/>
    <property type="project" value="InterPro"/>
</dbReference>
<dbReference type="FunFam" id="3.20.20.20:FF:000001">
    <property type="entry name" value="4-hydroxy-3-methylbut-2-en-1-yl diphosphate synthase (flavodoxin)"/>
    <property type="match status" value="1"/>
</dbReference>
<dbReference type="FunFam" id="3.30.413.10:FF:000005">
    <property type="entry name" value="4-hydroxy-3-methylbut-2-en-1-yl diphosphate synthase (flavodoxin)"/>
    <property type="match status" value="1"/>
</dbReference>
<dbReference type="Gene3D" id="3.20.20.20">
    <property type="entry name" value="Dihydropteroate synthase-like"/>
    <property type="match status" value="1"/>
</dbReference>
<dbReference type="Gene3D" id="3.30.413.10">
    <property type="entry name" value="Sulfite Reductase Hemoprotein, domain 1"/>
    <property type="match status" value="1"/>
</dbReference>
<dbReference type="HAMAP" id="MF_00159">
    <property type="entry name" value="IspG"/>
    <property type="match status" value="1"/>
</dbReference>
<dbReference type="InterPro" id="IPR011005">
    <property type="entry name" value="Dihydropteroate_synth-like_sf"/>
</dbReference>
<dbReference type="InterPro" id="IPR016425">
    <property type="entry name" value="IspG_bac"/>
</dbReference>
<dbReference type="InterPro" id="IPR004588">
    <property type="entry name" value="IspG_bac-typ"/>
</dbReference>
<dbReference type="InterPro" id="IPR045854">
    <property type="entry name" value="NO2/SO3_Rdtase_4Fe4S_sf"/>
</dbReference>
<dbReference type="NCBIfam" id="TIGR00612">
    <property type="entry name" value="ispG_gcpE"/>
    <property type="match status" value="1"/>
</dbReference>
<dbReference type="NCBIfam" id="NF001540">
    <property type="entry name" value="PRK00366.1"/>
    <property type="match status" value="1"/>
</dbReference>
<dbReference type="PANTHER" id="PTHR30454">
    <property type="entry name" value="4-HYDROXY-3-METHYLBUT-2-EN-1-YL DIPHOSPHATE SYNTHASE"/>
    <property type="match status" value="1"/>
</dbReference>
<dbReference type="PANTHER" id="PTHR30454:SF0">
    <property type="entry name" value="4-HYDROXY-3-METHYLBUT-2-EN-1-YL DIPHOSPHATE SYNTHASE (FERREDOXIN), CHLOROPLASTIC"/>
    <property type="match status" value="1"/>
</dbReference>
<dbReference type="Pfam" id="PF04551">
    <property type="entry name" value="GcpE"/>
    <property type="match status" value="1"/>
</dbReference>
<dbReference type="PIRSF" id="PIRSF004640">
    <property type="entry name" value="IspG"/>
    <property type="match status" value="1"/>
</dbReference>
<dbReference type="SUPFAM" id="SSF51717">
    <property type="entry name" value="Dihydropteroate synthetase-like"/>
    <property type="match status" value="1"/>
</dbReference>
<dbReference type="SUPFAM" id="SSF56014">
    <property type="entry name" value="Nitrite and sulphite reductase 4Fe-4S domain-like"/>
    <property type="match status" value="1"/>
</dbReference>
<comment type="function">
    <text evidence="1">Converts 2C-methyl-D-erythritol 2,4-cyclodiphosphate (ME-2,4cPP) into 1-hydroxy-2-methyl-2-(E)-butenyl 4-diphosphate.</text>
</comment>
<comment type="catalytic activity">
    <reaction evidence="1">
        <text>(2E)-4-hydroxy-3-methylbut-2-enyl diphosphate + oxidized [flavodoxin] + H2O + 2 H(+) = 2-C-methyl-D-erythritol 2,4-cyclic diphosphate + reduced [flavodoxin]</text>
        <dbReference type="Rhea" id="RHEA:43604"/>
        <dbReference type="Rhea" id="RHEA-COMP:10622"/>
        <dbReference type="Rhea" id="RHEA-COMP:10623"/>
        <dbReference type="ChEBI" id="CHEBI:15377"/>
        <dbReference type="ChEBI" id="CHEBI:15378"/>
        <dbReference type="ChEBI" id="CHEBI:57618"/>
        <dbReference type="ChEBI" id="CHEBI:58210"/>
        <dbReference type="ChEBI" id="CHEBI:58483"/>
        <dbReference type="ChEBI" id="CHEBI:128753"/>
        <dbReference type="EC" id="1.17.7.3"/>
    </reaction>
</comment>
<comment type="cofactor">
    <cofactor evidence="1">
        <name>[4Fe-4S] cluster</name>
        <dbReference type="ChEBI" id="CHEBI:49883"/>
    </cofactor>
    <text evidence="1">Binds 1 [4Fe-4S] cluster.</text>
</comment>
<comment type="pathway">
    <text evidence="1">Isoprenoid biosynthesis; isopentenyl diphosphate biosynthesis via DXP pathway; isopentenyl diphosphate from 1-deoxy-D-xylulose 5-phosphate: step 5/6.</text>
</comment>
<comment type="similarity">
    <text evidence="1">Belongs to the IspG family.</text>
</comment>
<gene>
    <name evidence="1" type="primary">ispG</name>
    <name type="synonym">gcpE</name>
    <name type="ordered locus">BT9727_4018</name>
</gene>
<accession>Q6HDN9</accession>